<gene>
    <name type="primary">fgf9</name>
    <name type="synonym">fgf-9</name>
</gene>
<sequence length="209" mass="23663">MAPLGEVGNYFGVQDAVSFGNVPVLQVDTPVLLSDHMSHHSEAGGLPRGSAVTDLEHLKGILRRRQLYCRTGFHLEIFPNGTIQGTRQDHNRFGILEFISIAVGLVSIRGVDSGLYLGMNEKGELYGSEKLTQECVFREQFEENWYNTYSSNIYKHADTGRRYYVALNKDGTSRDGTRTKRHQKFTHFLPRPVDPEKVPELYKDILSQS</sequence>
<feature type="propeptide" id="PRO_0000008979" evidence="1">
    <location>
        <begin position="1"/>
        <end position="3"/>
    </location>
</feature>
<feature type="chain" id="PRO_0000008980" description="Fibroblast growth factor 9">
    <location>
        <begin position="4"/>
        <end position="209"/>
    </location>
</feature>
<feature type="glycosylation site" description="N-linked (GlcNAc...) asparagine" evidence="2">
    <location>
        <position position="80"/>
    </location>
</feature>
<protein>
    <recommendedName>
        <fullName>Fibroblast growth factor 9</fullName>
        <shortName>FGF-9</shortName>
    </recommendedName>
    <alternativeName>
        <fullName>Glia-activating factor</fullName>
        <shortName>GAF</shortName>
    </alternativeName>
    <alternativeName>
        <fullName>HBGF-9</fullName>
    </alternativeName>
    <alternativeName>
        <fullName>Heparin-binding growth factor 9</fullName>
    </alternativeName>
    <alternativeName>
        <fullName>XFGF-9</fullName>
    </alternativeName>
</protein>
<name>FGF9_XENLA</name>
<reference key="1">
    <citation type="journal article" date="1996" name="Dev. Dyn.">
        <title>XFGF-9: a new fibroblast growth factor from Xenopus embryos.</title>
        <authorList>
            <person name="Song J."/>
            <person name="Slack J.M.W."/>
        </authorList>
    </citation>
    <scope>NUCLEOTIDE SEQUENCE [MRNA]</scope>
</reference>
<keyword id="KW-0217">Developmental protein</keyword>
<keyword id="KW-0221">Differentiation</keyword>
<keyword id="KW-0325">Glycoprotein</keyword>
<keyword id="KW-0339">Growth factor</keyword>
<keyword id="KW-0358">Heparin-binding</keyword>
<keyword id="KW-0497">Mitogen</keyword>
<keyword id="KW-1185">Reference proteome</keyword>
<keyword id="KW-0964">Secreted</keyword>
<evidence type="ECO:0000250" key="1"/>
<evidence type="ECO:0000305" key="2"/>
<dbReference type="EMBL" id="U47622">
    <property type="protein sequence ID" value="AAC59936.1"/>
    <property type="molecule type" value="mRNA"/>
</dbReference>
<dbReference type="RefSeq" id="NP_001079276.1">
    <property type="nucleotide sequence ID" value="NM_001085807.1"/>
</dbReference>
<dbReference type="SMR" id="Q91875"/>
<dbReference type="GlyCosmos" id="Q91875">
    <property type="glycosylation" value="1 site, No reported glycans"/>
</dbReference>
<dbReference type="GeneID" id="378562"/>
<dbReference type="KEGG" id="xla:378562"/>
<dbReference type="AGR" id="Xenbase:XB-GENE-6067935"/>
<dbReference type="CTD" id="378562"/>
<dbReference type="Xenbase" id="XB-GENE-6067935">
    <property type="gene designation" value="fgf9.S"/>
</dbReference>
<dbReference type="OrthoDB" id="6158176at2759"/>
<dbReference type="Proteomes" id="UP000186698">
    <property type="component" value="Chromosome 2S"/>
</dbReference>
<dbReference type="Bgee" id="378562">
    <property type="expression patterns" value="Expressed in muscle tissue and 6 other cell types or tissues"/>
</dbReference>
<dbReference type="GO" id="GO:0005737">
    <property type="term" value="C:cytoplasm"/>
    <property type="evidence" value="ECO:0000318"/>
    <property type="project" value="GO_Central"/>
</dbReference>
<dbReference type="GO" id="GO:0070062">
    <property type="term" value="C:extracellular exosome"/>
    <property type="evidence" value="ECO:0000247"/>
    <property type="project" value="AgBase"/>
</dbReference>
<dbReference type="GO" id="GO:0005615">
    <property type="term" value="C:extracellular space"/>
    <property type="evidence" value="ECO:0000247"/>
    <property type="project" value="AgBase"/>
</dbReference>
<dbReference type="GO" id="GO:0005104">
    <property type="term" value="F:fibroblast growth factor receptor binding"/>
    <property type="evidence" value="ECO:0000318"/>
    <property type="project" value="GO_Central"/>
</dbReference>
<dbReference type="GO" id="GO:0008083">
    <property type="term" value="F:growth factor activity"/>
    <property type="evidence" value="ECO:0000318"/>
    <property type="project" value="GO_Central"/>
</dbReference>
<dbReference type="GO" id="GO:0008201">
    <property type="term" value="F:heparin binding"/>
    <property type="evidence" value="ECO:0007669"/>
    <property type="project" value="UniProtKB-KW"/>
</dbReference>
<dbReference type="GO" id="GO:0001525">
    <property type="term" value="P:angiogenesis"/>
    <property type="evidence" value="ECO:0000247"/>
    <property type="project" value="AgBase"/>
</dbReference>
<dbReference type="GO" id="GO:0007267">
    <property type="term" value="P:cell-cell signaling"/>
    <property type="evidence" value="ECO:0000247"/>
    <property type="project" value="AgBase"/>
</dbReference>
<dbReference type="GO" id="GO:0002062">
    <property type="term" value="P:chondrocyte differentiation"/>
    <property type="evidence" value="ECO:0000247"/>
    <property type="project" value="AgBase"/>
</dbReference>
<dbReference type="GO" id="GO:0048566">
    <property type="term" value="P:embryonic digestive tract development"/>
    <property type="evidence" value="ECO:0000247"/>
    <property type="project" value="AgBase"/>
</dbReference>
<dbReference type="GO" id="GO:0030326">
    <property type="term" value="P:embryonic limb morphogenesis"/>
    <property type="evidence" value="ECO:0000247"/>
    <property type="project" value="AgBase"/>
</dbReference>
<dbReference type="GO" id="GO:0048706">
    <property type="term" value="P:embryonic skeletal system development"/>
    <property type="evidence" value="ECO:0000247"/>
    <property type="project" value="AgBase"/>
</dbReference>
<dbReference type="GO" id="GO:0001654">
    <property type="term" value="P:eye development"/>
    <property type="evidence" value="ECO:0000247"/>
    <property type="project" value="AgBase"/>
</dbReference>
<dbReference type="GO" id="GO:0008543">
    <property type="term" value="P:fibroblast growth factor receptor signaling pathway"/>
    <property type="evidence" value="ECO:0000247"/>
    <property type="project" value="AgBase"/>
</dbReference>
<dbReference type="GO" id="GO:0042472">
    <property type="term" value="P:inner ear morphogenesis"/>
    <property type="evidence" value="ECO:0000247"/>
    <property type="project" value="AgBase"/>
</dbReference>
<dbReference type="GO" id="GO:0030324">
    <property type="term" value="P:lung development"/>
    <property type="evidence" value="ECO:0000247"/>
    <property type="project" value="AgBase"/>
</dbReference>
<dbReference type="GO" id="GO:0060484">
    <property type="term" value="P:lung-associated mesenchyme development"/>
    <property type="evidence" value="ECO:0000247"/>
    <property type="project" value="AgBase"/>
</dbReference>
<dbReference type="GO" id="GO:0008584">
    <property type="term" value="P:male gonad development"/>
    <property type="evidence" value="ECO:0000247"/>
    <property type="project" value="AgBase"/>
</dbReference>
<dbReference type="GO" id="GO:0030238">
    <property type="term" value="P:male sex determination"/>
    <property type="evidence" value="ECO:0000247"/>
    <property type="project" value="AgBase"/>
</dbReference>
<dbReference type="GO" id="GO:0000122">
    <property type="term" value="P:negative regulation of transcription by RNA polymerase II"/>
    <property type="evidence" value="ECO:0000247"/>
    <property type="project" value="AgBase"/>
</dbReference>
<dbReference type="GO" id="GO:0030178">
    <property type="term" value="P:negative regulation of Wnt signaling pathway"/>
    <property type="evidence" value="ECO:0000247"/>
    <property type="project" value="AgBase"/>
</dbReference>
<dbReference type="GO" id="GO:0022008">
    <property type="term" value="P:neurogenesis"/>
    <property type="evidence" value="ECO:0000318"/>
    <property type="project" value="GO_Central"/>
</dbReference>
<dbReference type="GO" id="GO:0001649">
    <property type="term" value="P:osteoblast differentiation"/>
    <property type="evidence" value="ECO:0000247"/>
    <property type="project" value="AgBase"/>
</dbReference>
<dbReference type="GO" id="GO:0032927">
    <property type="term" value="P:positive regulation of activin receptor signaling pathway"/>
    <property type="evidence" value="ECO:0000247"/>
    <property type="project" value="AgBase"/>
</dbReference>
<dbReference type="GO" id="GO:0090263">
    <property type="term" value="P:positive regulation of canonical Wnt signaling pathway"/>
    <property type="evidence" value="ECO:0000247"/>
    <property type="project" value="AgBase"/>
</dbReference>
<dbReference type="GO" id="GO:0060045">
    <property type="term" value="P:positive regulation of cardiac muscle cell proliferation"/>
    <property type="evidence" value="ECO:0000247"/>
    <property type="project" value="AgBase"/>
</dbReference>
<dbReference type="GO" id="GO:0051781">
    <property type="term" value="P:positive regulation of cell division"/>
    <property type="evidence" value="ECO:0007669"/>
    <property type="project" value="UniProtKB-KW"/>
</dbReference>
<dbReference type="GO" id="GO:0008284">
    <property type="term" value="P:positive regulation of cell population proliferation"/>
    <property type="evidence" value="ECO:0000247"/>
    <property type="project" value="AgBase"/>
</dbReference>
<dbReference type="GO" id="GO:0050679">
    <property type="term" value="P:positive regulation of epithelial cell proliferation"/>
    <property type="evidence" value="ECO:0000247"/>
    <property type="project" value="AgBase"/>
</dbReference>
<dbReference type="GO" id="GO:0010628">
    <property type="term" value="P:positive regulation of gene expression"/>
    <property type="evidence" value="ECO:0000247"/>
    <property type="project" value="AgBase"/>
</dbReference>
<dbReference type="GO" id="GO:0043410">
    <property type="term" value="P:positive regulation of MAPK cascade"/>
    <property type="evidence" value="ECO:0000318"/>
    <property type="project" value="GO_Central"/>
</dbReference>
<dbReference type="GO" id="GO:0002053">
    <property type="term" value="P:positive regulation of mesenchymal cell proliferation"/>
    <property type="evidence" value="ECO:0000247"/>
    <property type="project" value="AgBase"/>
</dbReference>
<dbReference type="GO" id="GO:0045880">
    <property type="term" value="P:positive regulation of smoothened signaling pathway"/>
    <property type="evidence" value="ECO:0000247"/>
    <property type="project" value="AgBase"/>
</dbReference>
<dbReference type="GO" id="GO:0030949">
    <property type="term" value="P:positive regulation of vascular endothelial growth factor receptor signaling pathway"/>
    <property type="evidence" value="ECO:0000247"/>
    <property type="project" value="AgBase"/>
</dbReference>
<dbReference type="GO" id="GO:0006606">
    <property type="term" value="P:protein import into nucleus"/>
    <property type="evidence" value="ECO:0000247"/>
    <property type="project" value="AgBase"/>
</dbReference>
<dbReference type="GO" id="GO:0030334">
    <property type="term" value="P:regulation of cell migration"/>
    <property type="evidence" value="ECO:0000318"/>
    <property type="project" value="GO_Central"/>
</dbReference>
<dbReference type="GO" id="GO:0048505">
    <property type="term" value="P:regulation of timing of cell differentiation"/>
    <property type="evidence" value="ECO:0000247"/>
    <property type="project" value="AgBase"/>
</dbReference>
<dbReference type="GO" id="GO:0021762">
    <property type="term" value="P:substantia nigra development"/>
    <property type="evidence" value="ECO:0000247"/>
    <property type="project" value="AgBase"/>
</dbReference>
<dbReference type="FunFam" id="2.80.10.50:FF:000004">
    <property type="entry name" value="Fibroblast growth factor"/>
    <property type="match status" value="1"/>
</dbReference>
<dbReference type="Gene3D" id="2.80.10.50">
    <property type="match status" value="1"/>
</dbReference>
<dbReference type="InterPro" id="IPR002209">
    <property type="entry name" value="Fibroblast_GF_fam"/>
</dbReference>
<dbReference type="InterPro" id="IPR008996">
    <property type="entry name" value="IL1/FGF"/>
</dbReference>
<dbReference type="PANTHER" id="PTHR11486">
    <property type="entry name" value="FIBROBLAST GROWTH FACTOR"/>
    <property type="match status" value="1"/>
</dbReference>
<dbReference type="Pfam" id="PF00167">
    <property type="entry name" value="FGF"/>
    <property type="match status" value="1"/>
</dbReference>
<dbReference type="PRINTS" id="PR00263">
    <property type="entry name" value="HBGFFGF"/>
</dbReference>
<dbReference type="PRINTS" id="PR00262">
    <property type="entry name" value="IL1HBGF"/>
</dbReference>
<dbReference type="SMART" id="SM00442">
    <property type="entry name" value="FGF"/>
    <property type="match status" value="1"/>
</dbReference>
<dbReference type="SUPFAM" id="SSF50353">
    <property type="entry name" value="Cytokine"/>
    <property type="match status" value="1"/>
</dbReference>
<dbReference type="PROSITE" id="PS00247">
    <property type="entry name" value="HBGF_FGF"/>
    <property type="match status" value="1"/>
</dbReference>
<accession>Q91875</accession>
<organism>
    <name type="scientific">Xenopus laevis</name>
    <name type="common">African clawed frog</name>
    <dbReference type="NCBI Taxonomy" id="8355"/>
    <lineage>
        <taxon>Eukaryota</taxon>
        <taxon>Metazoa</taxon>
        <taxon>Chordata</taxon>
        <taxon>Craniata</taxon>
        <taxon>Vertebrata</taxon>
        <taxon>Euteleostomi</taxon>
        <taxon>Amphibia</taxon>
        <taxon>Batrachia</taxon>
        <taxon>Anura</taxon>
        <taxon>Pipoidea</taxon>
        <taxon>Pipidae</taxon>
        <taxon>Xenopodinae</taxon>
        <taxon>Xenopus</taxon>
        <taxon>Xenopus</taxon>
    </lineage>
</organism>
<proteinExistence type="evidence at transcript level"/>
<comment type="function">
    <text>May have a role in muscle development and neural differentiation, has no specific role in anteroposterior patterning.</text>
</comment>
<comment type="subcellular location">
    <subcellularLocation>
        <location>Secreted</location>
    </subcellularLocation>
</comment>
<comment type="tissue specificity">
    <text>Maternal transcript is found mainly in the animal hemisphere. Zygotic transcript is found around the blastopore and in the late gastrula stage, in the dorsal part. In later stages it is found along the dorsal part and head region.</text>
</comment>
<comment type="developmental stage">
    <text>The maternal protein is detected up to the blastula stage but declines by the early glastrula. Zygotic expression starts at around early gastrula; the level of expression reached at stage 15 persists during neurula and tailbud stages, and is further increased during the tadpole stages.</text>
</comment>
<comment type="PTM">
    <text>Glycosylated.</text>
</comment>
<comment type="similarity">
    <text evidence="2">Belongs to the heparin-binding growth factors family.</text>
</comment>